<keyword id="KW-0143">Chaperone</keyword>
<keyword id="KW-0963">Cytoplasm</keyword>
<keyword id="KW-0235">DNA replication</keyword>
<keyword id="KW-0479">Metal-binding</keyword>
<keyword id="KW-0677">Repeat</keyword>
<keyword id="KW-0346">Stress response</keyword>
<keyword id="KW-0862">Zinc</keyword>
<keyword id="KW-0863">Zinc-finger</keyword>
<sequence length="350" mass="38926">MKDYYAILGVSREASQEEIKKAYRRLALKYHPDRNPGDKEAEERFKEINEAYAVLSDPKKRAAYDRGHLEAPEYRPEDLFDLFFQEVFGVRGHRRPPRGEDLEAEVEVELQDLLHGAEKEVRYTRLVPCEACGGEGGRRTPCPTCRGQGVVESYRQSFFGTVVTRTACPHCKGRGYLLAETCPACRGRGRVPREERVRVQVPPGMDEGHLLRVPGYGNLGPGGPGDLYLRIRVRPHPHLERQGPDLVYRLRLGLAQAALGARVVVPGLEGPIPLDIPPGTGHGEVFALEGGGLPLPGGRGRGTLRVVVELAVPKKLSPKAQKLLRAYAEEVGEEVAPEGFWERLKGFFRK</sequence>
<dbReference type="EMBL" id="AE017221">
    <property type="protein sequence ID" value="AAS82154.1"/>
    <property type="molecule type" value="Genomic_DNA"/>
</dbReference>
<dbReference type="RefSeq" id="WP_011174167.1">
    <property type="nucleotide sequence ID" value="NC_005835.1"/>
</dbReference>
<dbReference type="SMR" id="Q72GN6"/>
<dbReference type="KEGG" id="tth:TT_C1812"/>
<dbReference type="eggNOG" id="COG0484">
    <property type="taxonomic scope" value="Bacteria"/>
</dbReference>
<dbReference type="HOGENOM" id="CLU_017633_0_7_0"/>
<dbReference type="OrthoDB" id="9779889at2"/>
<dbReference type="Proteomes" id="UP000000592">
    <property type="component" value="Chromosome"/>
</dbReference>
<dbReference type="GO" id="GO:0005737">
    <property type="term" value="C:cytoplasm"/>
    <property type="evidence" value="ECO:0007669"/>
    <property type="project" value="UniProtKB-SubCell"/>
</dbReference>
<dbReference type="GO" id="GO:0005524">
    <property type="term" value="F:ATP binding"/>
    <property type="evidence" value="ECO:0007669"/>
    <property type="project" value="InterPro"/>
</dbReference>
<dbReference type="GO" id="GO:0031072">
    <property type="term" value="F:heat shock protein binding"/>
    <property type="evidence" value="ECO:0007669"/>
    <property type="project" value="InterPro"/>
</dbReference>
<dbReference type="GO" id="GO:0051082">
    <property type="term" value="F:unfolded protein binding"/>
    <property type="evidence" value="ECO:0007669"/>
    <property type="project" value="UniProtKB-UniRule"/>
</dbReference>
<dbReference type="GO" id="GO:0008270">
    <property type="term" value="F:zinc ion binding"/>
    <property type="evidence" value="ECO:0007669"/>
    <property type="project" value="UniProtKB-UniRule"/>
</dbReference>
<dbReference type="GO" id="GO:0051085">
    <property type="term" value="P:chaperone cofactor-dependent protein refolding"/>
    <property type="evidence" value="ECO:0007669"/>
    <property type="project" value="TreeGrafter"/>
</dbReference>
<dbReference type="GO" id="GO:0006260">
    <property type="term" value="P:DNA replication"/>
    <property type="evidence" value="ECO:0007669"/>
    <property type="project" value="UniProtKB-KW"/>
</dbReference>
<dbReference type="GO" id="GO:0042026">
    <property type="term" value="P:protein refolding"/>
    <property type="evidence" value="ECO:0007669"/>
    <property type="project" value="TreeGrafter"/>
</dbReference>
<dbReference type="GO" id="GO:0009408">
    <property type="term" value="P:response to heat"/>
    <property type="evidence" value="ECO:0007669"/>
    <property type="project" value="InterPro"/>
</dbReference>
<dbReference type="CDD" id="cd06257">
    <property type="entry name" value="DnaJ"/>
    <property type="match status" value="1"/>
</dbReference>
<dbReference type="CDD" id="cd10747">
    <property type="entry name" value="DnaJ_C"/>
    <property type="match status" value="1"/>
</dbReference>
<dbReference type="CDD" id="cd10719">
    <property type="entry name" value="DnaJ_zf"/>
    <property type="match status" value="1"/>
</dbReference>
<dbReference type="FunFam" id="2.10.230.10:FF:000002">
    <property type="entry name" value="Molecular chaperone DnaJ"/>
    <property type="match status" value="1"/>
</dbReference>
<dbReference type="Gene3D" id="1.10.287.110">
    <property type="entry name" value="DnaJ domain"/>
    <property type="match status" value="1"/>
</dbReference>
<dbReference type="Gene3D" id="2.10.230.10">
    <property type="entry name" value="Heat shock protein DnaJ, cysteine-rich domain"/>
    <property type="match status" value="1"/>
</dbReference>
<dbReference type="Gene3D" id="2.60.260.20">
    <property type="entry name" value="Urease metallochaperone UreE, N-terminal domain"/>
    <property type="match status" value="2"/>
</dbReference>
<dbReference type="HAMAP" id="MF_01152">
    <property type="entry name" value="DnaJ"/>
    <property type="match status" value="1"/>
</dbReference>
<dbReference type="InterPro" id="IPR012724">
    <property type="entry name" value="DnaJ"/>
</dbReference>
<dbReference type="InterPro" id="IPR002939">
    <property type="entry name" value="DnaJ_C"/>
</dbReference>
<dbReference type="InterPro" id="IPR001623">
    <property type="entry name" value="DnaJ_domain"/>
</dbReference>
<dbReference type="InterPro" id="IPR018253">
    <property type="entry name" value="DnaJ_domain_CS"/>
</dbReference>
<dbReference type="InterPro" id="IPR008971">
    <property type="entry name" value="HSP40/DnaJ_pept-bd"/>
</dbReference>
<dbReference type="InterPro" id="IPR001305">
    <property type="entry name" value="HSP_DnaJ_Cys-rich_dom"/>
</dbReference>
<dbReference type="InterPro" id="IPR036410">
    <property type="entry name" value="HSP_DnaJ_Cys-rich_dom_sf"/>
</dbReference>
<dbReference type="InterPro" id="IPR036869">
    <property type="entry name" value="J_dom_sf"/>
</dbReference>
<dbReference type="PANTHER" id="PTHR43096:SF48">
    <property type="entry name" value="CHAPERONE PROTEIN DNAJ"/>
    <property type="match status" value="1"/>
</dbReference>
<dbReference type="PANTHER" id="PTHR43096">
    <property type="entry name" value="DNAJ HOMOLOG 1, MITOCHONDRIAL-RELATED"/>
    <property type="match status" value="1"/>
</dbReference>
<dbReference type="Pfam" id="PF00226">
    <property type="entry name" value="DnaJ"/>
    <property type="match status" value="1"/>
</dbReference>
<dbReference type="Pfam" id="PF01556">
    <property type="entry name" value="DnaJ_C"/>
    <property type="match status" value="1"/>
</dbReference>
<dbReference type="Pfam" id="PF00684">
    <property type="entry name" value="DnaJ_CXXCXGXG"/>
    <property type="match status" value="1"/>
</dbReference>
<dbReference type="PRINTS" id="PR00625">
    <property type="entry name" value="JDOMAIN"/>
</dbReference>
<dbReference type="SMART" id="SM00271">
    <property type="entry name" value="DnaJ"/>
    <property type="match status" value="1"/>
</dbReference>
<dbReference type="SUPFAM" id="SSF46565">
    <property type="entry name" value="Chaperone J-domain"/>
    <property type="match status" value="1"/>
</dbReference>
<dbReference type="SUPFAM" id="SSF57938">
    <property type="entry name" value="DnaJ/Hsp40 cysteine-rich domain"/>
    <property type="match status" value="1"/>
</dbReference>
<dbReference type="SUPFAM" id="SSF49493">
    <property type="entry name" value="HSP40/DnaJ peptide-binding domain"/>
    <property type="match status" value="2"/>
</dbReference>
<dbReference type="PROSITE" id="PS00636">
    <property type="entry name" value="DNAJ_1"/>
    <property type="match status" value="1"/>
</dbReference>
<dbReference type="PROSITE" id="PS50076">
    <property type="entry name" value="DNAJ_2"/>
    <property type="match status" value="1"/>
</dbReference>
<dbReference type="PROSITE" id="PS51188">
    <property type="entry name" value="ZF_CR"/>
    <property type="match status" value="1"/>
</dbReference>
<proteinExistence type="inferred from homology"/>
<organism>
    <name type="scientific">Thermus thermophilus (strain ATCC BAA-163 / DSM 7039 / HB27)</name>
    <dbReference type="NCBI Taxonomy" id="262724"/>
    <lineage>
        <taxon>Bacteria</taxon>
        <taxon>Thermotogati</taxon>
        <taxon>Deinococcota</taxon>
        <taxon>Deinococci</taxon>
        <taxon>Thermales</taxon>
        <taxon>Thermaceae</taxon>
        <taxon>Thermus</taxon>
    </lineage>
</organism>
<accession>Q72GN6</accession>
<gene>
    <name evidence="1" type="primary">dnaJ</name>
    <name type="ordered locus">TT_C1812</name>
</gene>
<comment type="function">
    <text evidence="1">Participates actively in the response to hyperosmotic and heat shock by preventing the aggregation of stress-denatured proteins and by disaggregating proteins, also in an autonomous, DnaK-independent fashion. Unfolded proteins bind initially to DnaJ; upon interaction with the DnaJ-bound protein, DnaK hydrolyzes its bound ATP, resulting in the formation of a stable complex. GrpE releases ADP from DnaK; ATP binding to DnaK triggers the release of the substrate protein, thus completing the reaction cycle. Several rounds of ATP-dependent interactions between DnaJ, DnaK and GrpE are required for fully efficient folding. Also involved, together with DnaK and GrpE, in the DNA replication of plasmids through activation of initiation proteins.</text>
</comment>
<comment type="cofactor">
    <cofactor evidence="1">
        <name>Zn(2+)</name>
        <dbReference type="ChEBI" id="CHEBI:29105"/>
    </cofactor>
    <text evidence="1">Binds 2 Zn(2+) ions per monomer.</text>
</comment>
<comment type="subunit">
    <text evidence="1">Homodimer.</text>
</comment>
<comment type="subcellular location">
    <subcellularLocation>
        <location evidence="1">Cytoplasm</location>
    </subcellularLocation>
</comment>
<comment type="domain">
    <text evidence="1">The J domain is necessary and sufficient to stimulate DnaK ATPase activity. Zinc center 1 plays an important role in the autonomous, DnaK-independent chaperone activity of DnaJ. Zinc center 2 is essential for interaction with DnaK and for DnaJ activity.</text>
</comment>
<comment type="similarity">
    <text evidence="1">Belongs to the DnaJ family.</text>
</comment>
<reference key="1">
    <citation type="journal article" date="2004" name="Nat. Biotechnol.">
        <title>The genome sequence of the extreme thermophile Thermus thermophilus.</title>
        <authorList>
            <person name="Henne A."/>
            <person name="Brueggemann H."/>
            <person name="Raasch C."/>
            <person name="Wiezer A."/>
            <person name="Hartsch T."/>
            <person name="Liesegang H."/>
            <person name="Johann A."/>
            <person name="Lienard T."/>
            <person name="Gohl O."/>
            <person name="Martinez-Arias R."/>
            <person name="Jacobi C."/>
            <person name="Starkuviene V."/>
            <person name="Schlenczeck S."/>
            <person name="Dencker S."/>
            <person name="Huber R."/>
            <person name="Klenk H.-P."/>
            <person name="Kramer W."/>
            <person name="Merkl R."/>
            <person name="Gottschalk G."/>
            <person name="Fritz H.-J."/>
        </authorList>
    </citation>
    <scope>NUCLEOTIDE SEQUENCE [LARGE SCALE GENOMIC DNA]</scope>
    <source>
        <strain>ATCC BAA-163 / DSM 7039 / HB27</strain>
    </source>
</reference>
<protein>
    <recommendedName>
        <fullName evidence="1">Chaperone protein DnaJ</fullName>
    </recommendedName>
</protein>
<name>DNAJ_THET2</name>
<evidence type="ECO:0000255" key="1">
    <source>
        <dbReference type="HAMAP-Rule" id="MF_01152"/>
    </source>
</evidence>
<feature type="chain" id="PRO_0000070919" description="Chaperone protein DnaJ">
    <location>
        <begin position="1"/>
        <end position="350"/>
    </location>
</feature>
<feature type="domain" description="J" evidence="1">
    <location>
        <begin position="3"/>
        <end position="68"/>
    </location>
</feature>
<feature type="repeat" description="CXXCXGXG motif">
    <location>
        <begin position="129"/>
        <end position="136"/>
    </location>
</feature>
<feature type="repeat" description="CXXCXGXG motif">
    <location>
        <begin position="142"/>
        <end position="149"/>
    </location>
</feature>
<feature type="repeat" description="CXXCXGXG motif">
    <location>
        <begin position="168"/>
        <end position="175"/>
    </location>
</feature>
<feature type="repeat" description="CXXCXGXG motif">
    <location>
        <begin position="182"/>
        <end position="189"/>
    </location>
</feature>
<feature type="zinc finger region" description="CR-type" evidence="1">
    <location>
        <begin position="116"/>
        <end position="194"/>
    </location>
</feature>
<feature type="binding site" evidence="1">
    <location>
        <position position="129"/>
    </location>
    <ligand>
        <name>Zn(2+)</name>
        <dbReference type="ChEBI" id="CHEBI:29105"/>
        <label>1</label>
    </ligand>
</feature>
<feature type="binding site" evidence="1">
    <location>
        <position position="132"/>
    </location>
    <ligand>
        <name>Zn(2+)</name>
        <dbReference type="ChEBI" id="CHEBI:29105"/>
        <label>1</label>
    </ligand>
</feature>
<feature type="binding site" evidence="1">
    <location>
        <position position="142"/>
    </location>
    <ligand>
        <name>Zn(2+)</name>
        <dbReference type="ChEBI" id="CHEBI:29105"/>
        <label>2</label>
    </ligand>
</feature>
<feature type="binding site" evidence="1">
    <location>
        <position position="145"/>
    </location>
    <ligand>
        <name>Zn(2+)</name>
        <dbReference type="ChEBI" id="CHEBI:29105"/>
        <label>2</label>
    </ligand>
</feature>
<feature type="binding site" evidence="1">
    <location>
        <position position="168"/>
    </location>
    <ligand>
        <name>Zn(2+)</name>
        <dbReference type="ChEBI" id="CHEBI:29105"/>
        <label>2</label>
    </ligand>
</feature>
<feature type="binding site" evidence="1">
    <location>
        <position position="171"/>
    </location>
    <ligand>
        <name>Zn(2+)</name>
        <dbReference type="ChEBI" id="CHEBI:29105"/>
        <label>2</label>
    </ligand>
</feature>
<feature type="binding site" evidence="1">
    <location>
        <position position="182"/>
    </location>
    <ligand>
        <name>Zn(2+)</name>
        <dbReference type="ChEBI" id="CHEBI:29105"/>
        <label>1</label>
    </ligand>
</feature>
<feature type="binding site" evidence="1">
    <location>
        <position position="185"/>
    </location>
    <ligand>
        <name>Zn(2+)</name>
        <dbReference type="ChEBI" id="CHEBI:29105"/>
        <label>1</label>
    </ligand>
</feature>